<accession>Q3B0N0</accession>
<evidence type="ECO:0000255" key="1">
    <source>
        <dbReference type="HAMAP-Rule" id="MF_01382"/>
    </source>
</evidence>
<reference key="1">
    <citation type="submission" date="2005-08" db="EMBL/GenBank/DDBJ databases">
        <title>Complete sequence of Synechococcus sp. CC9902.</title>
        <authorList>
            <person name="Copeland A."/>
            <person name="Lucas S."/>
            <person name="Lapidus A."/>
            <person name="Barry K."/>
            <person name="Detter J.C."/>
            <person name="Glavina T."/>
            <person name="Hammon N."/>
            <person name="Israni S."/>
            <person name="Pitluck S."/>
            <person name="Martinez M."/>
            <person name="Schmutz J."/>
            <person name="Larimer F."/>
            <person name="Land M."/>
            <person name="Kyrpides N."/>
            <person name="Ivanova N."/>
            <person name="Richardson P."/>
        </authorList>
    </citation>
    <scope>NUCLEOTIDE SEQUENCE [LARGE SCALE GENOMIC DNA]</scope>
    <source>
        <strain>CC9902</strain>
    </source>
</reference>
<feature type="chain" id="PRO_0000318470" description="Protein translocase subunit SecA">
    <location>
        <begin position="1"/>
        <end position="937"/>
    </location>
</feature>
<feature type="binding site" evidence="1">
    <location>
        <position position="90"/>
    </location>
    <ligand>
        <name>ATP</name>
        <dbReference type="ChEBI" id="CHEBI:30616"/>
    </ligand>
</feature>
<feature type="binding site" evidence="1">
    <location>
        <begin position="108"/>
        <end position="112"/>
    </location>
    <ligand>
        <name>ATP</name>
        <dbReference type="ChEBI" id="CHEBI:30616"/>
    </ligand>
</feature>
<feature type="binding site" evidence="1">
    <location>
        <position position="509"/>
    </location>
    <ligand>
        <name>ATP</name>
        <dbReference type="ChEBI" id="CHEBI:30616"/>
    </ligand>
</feature>
<name>SECA_SYNS9</name>
<organism>
    <name type="scientific">Synechococcus sp. (strain CC9902)</name>
    <dbReference type="NCBI Taxonomy" id="316279"/>
    <lineage>
        <taxon>Bacteria</taxon>
        <taxon>Bacillati</taxon>
        <taxon>Cyanobacteriota</taxon>
        <taxon>Cyanophyceae</taxon>
        <taxon>Synechococcales</taxon>
        <taxon>Synechococcaceae</taxon>
        <taxon>Synechococcus</taxon>
    </lineage>
</organism>
<comment type="function">
    <text evidence="1">Part of the Sec protein translocase complex. Interacts with the SecYEG preprotein conducting channel. Has a central role in coupling the hydrolysis of ATP to the transfer of proteins into and across the cell membrane, serving as an ATP-driven molecular motor driving the stepwise translocation of polypeptide chains across the membrane.</text>
</comment>
<comment type="function">
    <text evidence="1">Probably participates in protein translocation into and across both the cytoplasmic and thylakoid membranes in cyanobacterial cells.</text>
</comment>
<comment type="catalytic activity">
    <reaction evidence="1">
        <text>ATP + H2O + cellular proteinSide 1 = ADP + phosphate + cellular proteinSide 2.</text>
        <dbReference type="EC" id="7.4.2.8"/>
    </reaction>
</comment>
<comment type="subunit">
    <text evidence="1">Monomer and homodimer. Part of the essential Sec protein translocation apparatus which comprises SecA, SecYEG and auxiliary proteins SecDF. Other proteins may also be involved.</text>
</comment>
<comment type="subcellular location">
    <subcellularLocation>
        <location evidence="1">Cell inner membrane</location>
        <topology evidence="1">Peripheral membrane protein</topology>
        <orientation evidence="1">Cytoplasmic side</orientation>
    </subcellularLocation>
    <subcellularLocation>
        <location evidence="1">Cellular thylakoid membrane</location>
        <topology evidence="1">Peripheral membrane protein</topology>
        <orientation evidence="1">Cytoplasmic side</orientation>
    </subcellularLocation>
    <subcellularLocation>
        <location evidence="1">Cytoplasm</location>
    </subcellularLocation>
</comment>
<comment type="similarity">
    <text evidence="1">Belongs to the SecA family.</text>
</comment>
<sequence length="937" mass="105918">MLKLLLGDPNARKLKRYSPIVSDINLLEEDISPLSDDELRSRTSDLRQRLFNAGDLHNQIPILDELLPEAFSIVREASKRVLGMRHFDVQLIGGMVLHEGQIAEMKTGEGKTLVATLPSYLNALTGRGVHVVTVNDYLARRDAEWMGQVHRFLGLSVGLIQQDMRPEERRRNYACDITYATNSELGFDYLRDNMAADISEVVQREFQFCVIDEVDSILIDEARTPLIISGQVEREQEKYQQAAQLAASLERSAEMGKDGIDPEGDYEVDEKQRSCTLTDEGFAKAEQTLGVQDLFDPQDPWAHYITNALKAKELFVKDVNYIVRDDEAVIVDEFTGRVMPGRRWSDGQHQAIEAKESLQIQPETQTLASITYQNFFLLYPRLAGMTGTAKTEEVEFEKTYKLQTTIVPTNRIRARQDWADQVYKTEVAKWRAVANETADIHKKARPVLVGTTSVEKSELLSSLLTEQDIPHNLLNAKPENVERESEIVAQAGRAGAVTIATNMAGRGTDIILGGNSDYMARLKLREVLLSRLVKPEDGPLPSLPVQDSATASGFSEASATVAPRVSASLYPCELSGPTDQLLAQLARDLVKAWGDRALSVLDLEERIATAAEKAPTDDAQIQSLREAIAFVRGEYDAVVKEEEARVRDAGGLHVIGTERHESRRVDNQLRGRAGRQGDPGSTRFFLSLGDNLLRIFGGERVAGLMNAFRVEEDMPIESGMLTRSLEGAQKKVETYYYDIRKQVFEYDEVMNNQRRAVYSERRRVLDGRALKKQVIGYGERTMNEIVEAYVNPDLPPEEWDLDQLVGKVKEFIYLLEDLTPAQVNGLGMDELKAFLQEQLRNAYDLKEGQIDQQRPGLMREAERFFILQQIDTLWREHLQAMDALRESVGLRGYGQKDPLIEYKNEGYDMFLEMMTNMRRNVIYSMFMFQPAAPQNQN</sequence>
<gene>
    <name evidence="1" type="primary">secA</name>
    <name type="ordered locus">Syncc9902_0123</name>
</gene>
<dbReference type="EC" id="7.4.2.8" evidence="1"/>
<dbReference type="EMBL" id="CP000097">
    <property type="protein sequence ID" value="ABB25098.1"/>
    <property type="molecule type" value="Genomic_DNA"/>
</dbReference>
<dbReference type="RefSeq" id="WP_011358965.1">
    <property type="nucleotide sequence ID" value="NC_007513.1"/>
</dbReference>
<dbReference type="SMR" id="Q3B0N0"/>
<dbReference type="STRING" id="316279.Syncc9902_0123"/>
<dbReference type="KEGG" id="sye:Syncc9902_0123"/>
<dbReference type="eggNOG" id="COG0653">
    <property type="taxonomic scope" value="Bacteria"/>
</dbReference>
<dbReference type="HOGENOM" id="CLU_005314_3_0_3"/>
<dbReference type="OrthoDB" id="9805579at2"/>
<dbReference type="Proteomes" id="UP000002712">
    <property type="component" value="Chromosome"/>
</dbReference>
<dbReference type="GO" id="GO:0031522">
    <property type="term" value="C:cell envelope Sec protein transport complex"/>
    <property type="evidence" value="ECO:0007669"/>
    <property type="project" value="TreeGrafter"/>
</dbReference>
<dbReference type="GO" id="GO:0005829">
    <property type="term" value="C:cytosol"/>
    <property type="evidence" value="ECO:0007669"/>
    <property type="project" value="TreeGrafter"/>
</dbReference>
<dbReference type="GO" id="GO:0031676">
    <property type="term" value="C:plasma membrane-derived thylakoid membrane"/>
    <property type="evidence" value="ECO:0007669"/>
    <property type="project" value="UniProtKB-SubCell"/>
</dbReference>
<dbReference type="GO" id="GO:0005524">
    <property type="term" value="F:ATP binding"/>
    <property type="evidence" value="ECO:0007669"/>
    <property type="project" value="UniProtKB-UniRule"/>
</dbReference>
<dbReference type="GO" id="GO:0008564">
    <property type="term" value="F:protein-exporting ATPase activity"/>
    <property type="evidence" value="ECO:0007669"/>
    <property type="project" value="UniProtKB-EC"/>
</dbReference>
<dbReference type="GO" id="GO:0065002">
    <property type="term" value="P:intracellular protein transmembrane transport"/>
    <property type="evidence" value="ECO:0007669"/>
    <property type="project" value="UniProtKB-UniRule"/>
</dbReference>
<dbReference type="GO" id="GO:0017038">
    <property type="term" value="P:protein import"/>
    <property type="evidence" value="ECO:0007669"/>
    <property type="project" value="InterPro"/>
</dbReference>
<dbReference type="GO" id="GO:0006605">
    <property type="term" value="P:protein targeting"/>
    <property type="evidence" value="ECO:0007669"/>
    <property type="project" value="UniProtKB-UniRule"/>
</dbReference>
<dbReference type="GO" id="GO:0043952">
    <property type="term" value="P:protein transport by the Sec complex"/>
    <property type="evidence" value="ECO:0007669"/>
    <property type="project" value="TreeGrafter"/>
</dbReference>
<dbReference type="CDD" id="cd17928">
    <property type="entry name" value="DEXDc_SecA"/>
    <property type="match status" value="1"/>
</dbReference>
<dbReference type="CDD" id="cd18803">
    <property type="entry name" value="SF2_C_secA"/>
    <property type="match status" value="1"/>
</dbReference>
<dbReference type="FunFam" id="3.90.1440.10:FF:000003">
    <property type="entry name" value="Preprotein translocase SecA subunit"/>
    <property type="match status" value="1"/>
</dbReference>
<dbReference type="FunFam" id="3.40.50.300:FF:000429">
    <property type="entry name" value="Preprotein translocase subunit SecA"/>
    <property type="match status" value="1"/>
</dbReference>
<dbReference type="FunFam" id="1.10.3060.10:FF:000003">
    <property type="entry name" value="Protein translocase subunit SecA"/>
    <property type="match status" value="1"/>
</dbReference>
<dbReference type="FunFam" id="3.40.50.300:FF:000334">
    <property type="entry name" value="Protein translocase subunit SecA"/>
    <property type="match status" value="1"/>
</dbReference>
<dbReference type="Gene3D" id="1.10.3060.10">
    <property type="entry name" value="Helical scaffold and wing domains of SecA"/>
    <property type="match status" value="1"/>
</dbReference>
<dbReference type="Gene3D" id="3.40.50.300">
    <property type="entry name" value="P-loop containing nucleotide triphosphate hydrolases"/>
    <property type="match status" value="2"/>
</dbReference>
<dbReference type="Gene3D" id="3.90.1440.10">
    <property type="entry name" value="SecA, preprotein cross-linking domain"/>
    <property type="match status" value="1"/>
</dbReference>
<dbReference type="HAMAP" id="MF_01382">
    <property type="entry name" value="SecA"/>
    <property type="match status" value="1"/>
</dbReference>
<dbReference type="InterPro" id="IPR014001">
    <property type="entry name" value="Helicase_ATP-bd"/>
</dbReference>
<dbReference type="InterPro" id="IPR027417">
    <property type="entry name" value="P-loop_NTPase"/>
</dbReference>
<dbReference type="InterPro" id="IPR000185">
    <property type="entry name" value="SecA"/>
</dbReference>
<dbReference type="InterPro" id="IPR020937">
    <property type="entry name" value="SecA_CS"/>
</dbReference>
<dbReference type="InterPro" id="IPR011115">
    <property type="entry name" value="SecA_DEAD"/>
</dbReference>
<dbReference type="InterPro" id="IPR014018">
    <property type="entry name" value="SecA_motor_DEAD"/>
</dbReference>
<dbReference type="InterPro" id="IPR011130">
    <property type="entry name" value="SecA_preprotein_X-link_dom"/>
</dbReference>
<dbReference type="InterPro" id="IPR044722">
    <property type="entry name" value="SecA_SF2_C"/>
</dbReference>
<dbReference type="InterPro" id="IPR011116">
    <property type="entry name" value="SecA_Wing/Scaffold"/>
</dbReference>
<dbReference type="InterPro" id="IPR036266">
    <property type="entry name" value="SecA_Wing/Scaffold_sf"/>
</dbReference>
<dbReference type="InterPro" id="IPR036670">
    <property type="entry name" value="SecA_X-link_sf"/>
</dbReference>
<dbReference type="NCBIfam" id="TIGR00963">
    <property type="entry name" value="secA"/>
    <property type="match status" value="1"/>
</dbReference>
<dbReference type="PANTHER" id="PTHR30612:SF0">
    <property type="entry name" value="CHLOROPLAST PROTEIN-TRANSPORTING ATPASE"/>
    <property type="match status" value="1"/>
</dbReference>
<dbReference type="PANTHER" id="PTHR30612">
    <property type="entry name" value="SECA INNER MEMBRANE COMPONENT OF SEC PROTEIN SECRETION SYSTEM"/>
    <property type="match status" value="1"/>
</dbReference>
<dbReference type="Pfam" id="PF21090">
    <property type="entry name" value="P-loop_SecA"/>
    <property type="match status" value="1"/>
</dbReference>
<dbReference type="Pfam" id="PF07517">
    <property type="entry name" value="SecA_DEAD"/>
    <property type="match status" value="1"/>
</dbReference>
<dbReference type="Pfam" id="PF01043">
    <property type="entry name" value="SecA_PP_bind"/>
    <property type="match status" value="1"/>
</dbReference>
<dbReference type="Pfam" id="PF07516">
    <property type="entry name" value="SecA_SW"/>
    <property type="match status" value="1"/>
</dbReference>
<dbReference type="PRINTS" id="PR00906">
    <property type="entry name" value="SECA"/>
</dbReference>
<dbReference type="SMART" id="SM00957">
    <property type="entry name" value="SecA_DEAD"/>
    <property type="match status" value="1"/>
</dbReference>
<dbReference type="SMART" id="SM00958">
    <property type="entry name" value="SecA_PP_bind"/>
    <property type="match status" value="1"/>
</dbReference>
<dbReference type="SUPFAM" id="SSF81886">
    <property type="entry name" value="Helical scaffold and wing domains of SecA"/>
    <property type="match status" value="1"/>
</dbReference>
<dbReference type="SUPFAM" id="SSF52540">
    <property type="entry name" value="P-loop containing nucleoside triphosphate hydrolases"/>
    <property type="match status" value="2"/>
</dbReference>
<dbReference type="SUPFAM" id="SSF81767">
    <property type="entry name" value="Pre-protein crosslinking domain of SecA"/>
    <property type="match status" value="1"/>
</dbReference>
<dbReference type="PROSITE" id="PS01312">
    <property type="entry name" value="SECA"/>
    <property type="match status" value="1"/>
</dbReference>
<dbReference type="PROSITE" id="PS51196">
    <property type="entry name" value="SECA_MOTOR_DEAD"/>
    <property type="match status" value="1"/>
</dbReference>
<proteinExistence type="inferred from homology"/>
<protein>
    <recommendedName>
        <fullName evidence="1">Protein translocase subunit SecA</fullName>
        <ecNumber evidence="1">7.4.2.8</ecNumber>
    </recommendedName>
</protein>
<keyword id="KW-0067">ATP-binding</keyword>
<keyword id="KW-0997">Cell inner membrane</keyword>
<keyword id="KW-1003">Cell membrane</keyword>
<keyword id="KW-0963">Cytoplasm</keyword>
<keyword id="KW-0472">Membrane</keyword>
<keyword id="KW-0547">Nucleotide-binding</keyword>
<keyword id="KW-0653">Protein transport</keyword>
<keyword id="KW-1185">Reference proteome</keyword>
<keyword id="KW-0793">Thylakoid</keyword>
<keyword id="KW-1278">Translocase</keyword>
<keyword id="KW-0811">Translocation</keyword>
<keyword id="KW-0813">Transport</keyword>